<feature type="chain" id="PRO_0000210891" description="Acyl-homoserine-lactone synthase">
    <location>
        <begin position="1"/>
        <end position="196"/>
    </location>
</feature>
<proteinExistence type="inferred from homology"/>
<organism>
    <name type="scientific">Pseudomonas fluorescens</name>
    <dbReference type="NCBI Taxonomy" id="294"/>
    <lineage>
        <taxon>Bacteria</taxon>
        <taxon>Pseudomonadati</taxon>
        <taxon>Pseudomonadota</taxon>
        <taxon>Gammaproteobacteria</taxon>
        <taxon>Pseudomonadales</taxon>
        <taxon>Pseudomonadaceae</taxon>
        <taxon>Pseudomonas</taxon>
    </lineage>
</organism>
<reference key="1">
    <citation type="journal article" date="1998" name="J. Bacteriol.">
        <title>A seven-gene locus for synthesis of phenazine-1-carboxylic acid by Pseudomonas fluorescens 2-79.</title>
        <authorList>
            <person name="Mavrodi D.V."/>
            <person name="Ksenzenko V.N."/>
            <person name="Bonsall R.F."/>
            <person name="Cook R.J."/>
            <person name="Boronin A.M."/>
            <person name="Thomashow L.S."/>
        </authorList>
    </citation>
    <scope>NUCLEOTIDE SEQUENCE [GENOMIC DNA]</scope>
    <source>
        <strain>NRRL B-15132 / 2-79</strain>
    </source>
</reference>
<gene>
    <name type="primary">phzI</name>
</gene>
<protein>
    <recommendedName>
        <fullName>Acyl-homoserine-lactone synthase</fullName>
        <ecNumber>2.3.1.184</ecNumber>
    </recommendedName>
    <alternativeName>
        <fullName>Autoinducer synthesis protein PhzI</fullName>
    </alternativeName>
</protein>
<name>PHZI_PSEFL</name>
<keyword id="KW-0045">Antibiotic biosynthesis</keyword>
<keyword id="KW-0071">Autoinducer synthesis</keyword>
<keyword id="KW-0673">Quorum sensing</keyword>
<keyword id="KW-0949">S-adenosyl-L-methionine</keyword>
<keyword id="KW-0808">Transferase</keyword>
<comment type="function">
    <text>Required for the synthesis of a yet unknown N-aceyl-homoserine lactone (N-aceyl-HSL), an autoinducer molecule which binds to PhzR and thus regulates phenazine production.</text>
</comment>
<comment type="catalytic activity">
    <reaction>
        <text>a fatty acyl-[ACP] + S-adenosyl-L-methionine = an N-acyl-L-homoserine lactone + S-methyl-5'-thioadenosine + holo-[ACP] + H(+)</text>
        <dbReference type="Rhea" id="RHEA:10096"/>
        <dbReference type="Rhea" id="RHEA-COMP:9685"/>
        <dbReference type="Rhea" id="RHEA-COMP:14125"/>
        <dbReference type="ChEBI" id="CHEBI:15378"/>
        <dbReference type="ChEBI" id="CHEBI:17509"/>
        <dbReference type="ChEBI" id="CHEBI:55474"/>
        <dbReference type="ChEBI" id="CHEBI:59789"/>
        <dbReference type="ChEBI" id="CHEBI:64479"/>
        <dbReference type="ChEBI" id="CHEBI:138651"/>
        <dbReference type="EC" id="2.3.1.184"/>
    </reaction>
</comment>
<comment type="similarity">
    <text evidence="1">Belongs to the autoinducer synthase family.</text>
</comment>
<accession>Q51785</accession>
<sequence length="196" mass="22400">MHMEEHALSAMDDELKLMLGRFRHEQFVEKLGWRLPIPPHQAGYEWDQYDTEHARYLLAFNEHRSIVGCARLIPTTFPNLLEGVFSHACAGAPPRHPAIWEMTRFTTREPQLAMPLFWKTLKTASLAGADAIVGIVNSTMERYYKINGVKYERLGSVIDHQNEKILAIKLSAHREHHRGARLPSGFTSEALLEETA</sequence>
<dbReference type="EC" id="2.3.1.184"/>
<dbReference type="EMBL" id="L48616">
    <property type="protein sequence ID" value="AAC18898.1"/>
    <property type="molecule type" value="Genomic_DNA"/>
</dbReference>
<dbReference type="RefSeq" id="WP_043050169.1">
    <property type="nucleotide sequence ID" value="NZ_JXCQ01000041.1"/>
</dbReference>
<dbReference type="SMR" id="Q51785"/>
<dbReference type="GO" id="GO:0061579">
    <property type="term" value="F:N-acyl homoserine lactone synthase activity"/>
    <property type="evidence" value="ECO:0007669"/>
    <property type="project" value="UniProtKB-EC"/>
</dbReference>
<dbReference type="GO" id="GO:0017000">
    <property type="term" value="P:antibiotic biosynthetic process"/>
    <property type="evidence" value="ECO:0007669"/>
    <property type="project" value="UniProtKB-KW"/>
</dbReference>
<dbReference type="GO" id="GO:0009372">
    <property type="term" value="P:quorum sensing"/>
    <property type="evidence" value="ECO:0007669"/>
    <property type="project" value="UniProtKB-KW"/>
</dbReference>
<dbReference type="GO" id="GO:0007165">
    <property type="term" value="P:signal transduction"/>
    <property type="evidence" value="ECO:0007669"/>
    <property type="project" value="TreeGrafter"/>
</dbReference>
<dbReference type="Gene3D" id="3.40.630.30">
    <property type="match status" value="1"/>
</dbReference>
<dbReference type="InterPro" id="IPR016181">
    <property type="entry name" value="Acyl_CoA_acyltransferase"/>
</dbReference>
<dbReference type="InterPro" id="IPR018311">
    <property type="entry name" value="Autoind_synth_CS"/>
</dbReference>
<dbReference type="InterPro" id="IPR001690">
    <property type="entry name" value="Autoind_synthase"/>
</dbReference>
<dbReference type="PANTHER" id="PTHR39322">
    <property type="entry name" value="ACYL-HOMOSERINE-LACTONE SYNTHASE"/>
    <property type="match status" value="1"/>
</dbReference>
<dbReference type="PANTHER" id="PTHR39322:SF1">
    <property type="entry name" value="ISOVALERYL-HOMOSERINE LACTONE SYNTHASE"/>
    <property type="match status" value="1"/>
</dbReference>
<dbReference type="Pfam" id="PF00765">
    <property type="entry name" value="Autoind_synth"/>
    <property type="match status" value="1"/>
</dbReference>
<dbReference type="PRINTS" id="PR01549">
    <property type="entry name" value="AUTOINDCRSYN"/>
</dbReference>
<dbReference type="SUPFAM" id="SSF55729">
    <property type="entry name" value="Acyl-CoA N-acyltransferases (Nat)"/>
    <property type="match status" value="1"/>
</dbReference>
<dbReference type="PROSITE" id="PS00949">
    <property type="entry name" value="AUTOINDUCER_SYNTH_1"/>
    <property type="match status" value="1"/>
</dbReference>
<dbReference type="PROSITE" id="PS51187">
    <property type="entry name" value="AUTOINDUCER_SYNTH_2"/>
    <property type="match status" value="1"/>
</dbReference>
<evidence type="ECO:0000255" key="1">
    <source>
        <dbReference type="PROSITE-ProRule" id="PRU00533"/>
    </source>
</evidence>